<organism>
    <name type="scientific">Mycobacterium marinum (strain ATCC BAA-535 / M)</name>
    <dbReference type="NCBI Taxonomy" id="216594"/>
    <lineage>
        <taxon>Bacteria</taxon>
        <taxon>Bacillati</taxon>
        <taxon>Actinomycetota</taxon>
        <taxon>Actinomycetes</taxon>
        <taxon>Mycobacteriales</taxon>
        <taxon>Mycobacteriaceae</taxon>
        <taxon>Mycobacterium</taxon>
        <taxon>Mycobacterium ulcerans group</taxon>
    </lineage>
</organism>
<feature type="chain" id="PRO_1000141892" description="Large ribosomal subunit protein uL3">
    <location>
        <begin position="1"/>
        <end position="217"/>
    </location>
</feature>
<reference key="1">
    <citation type="journal article" date="2008" name="Genome Res.">
        <title>Insights from the complete genome sequence of Mycobacterium marinum on the evolution of Mycobacterium tuberculosis.</title>
        <authorList>
            <person name="Stinear T.P."/>
            <person name="Seemann T."/>
            <person name="Harrison P.F."/>
            <person name="Jenkin G.A."/>
            <person name="Davies J.K."/>
            <person name="Johnson P.D."/>
            <person name="Abdellah Z."/>
            <person name="Arrowsmith C."/>
            <person name="Chillingworth T."/>
            <person name="Churcher C."/>
            <person name="Clarke K."/>
            <person name="Cronin A."/>
            <person name="Davis P."/>
            <person name="Goodhead I."/>
            <person name="Holroyd N."/>
            <person name="Jagels K."/>
            <person name="Lord A."/>
            <person name="Moule S."/>
            <person name="Mungall K."/>
            <person name="Norbertczak H."/>
            <person name="Quail M.A."/>
            <person name="Rabbinowitsch E."/>
            <person name="Walker D."/>
            <person name="White B."/>
            <person name="Whitehead S."/>
            <person name="Small P.L."/>
            <person name="Brosch R."/>
            <person name="Ramakrishnan L."/>
            <person name="Fischbach M.A."/>
            <person name="Parkhill J."/>
            <person name="Cole S.T."/>
        </authorList>
    </citation>
    <scope>NUCLEOTIDE SEQUENCE [LARGE SCALE GENOMIC DNA]</scope>
    <source>
        <strain>ATCC BAA-535 / M</strain>
    </source>
</reference>
<keyword id="KW-1185">Reference proteome</keyword>
<keyword id="KW-0687">Ribonucleoprotein</keyword>
<keyword id="KW-0689">Ribosomal protein</keyword>
<keyword id="KW-0694">RNA-binding</keyword>
<keyword id="KW-0699">rRNA-binding</keyword>
<protein>
    <recommendedName>
        <fullName evidence="1">Large ribosomal subunit protein uL3</fullName>
    </recommendedName>
    <alternativeName>
        <fullName evidence="2">50S ribosomal protein L3</fullName>
    </alternativeName>
</protein>
<name>RL3_MYCMM</name>
<evidence type="ECO:0000255" key="1">
    <source>
        <dbReference type="HAMAP-Rule" id="MF_01325"/>
    </source>
</evidence>
<evidence type="ECO:0000305" key="2"/>
<accession>B2HSN1</accession>
<sequence>MARKGILGTKLGMTQVFDENNKVVPVTVVKAGPNVVTRIRTPERDGYSAVQLAYGEISPRKVNKPVTGQYTAAGVNPRRHLAELRLDDAEAVTEYEVGQELTAEIFADGSYVDVTGTSKGKGFAGTMKRHGFSGQGASHGAQAVHRRPGSIGGCATPARVFKGTRMAGRMGNDRVTVQNLLVHKVDAEQGVLLIKGAVPGRTGGLVMVRSAIKRGEK</sequence>
<dbReference type="EMBL" id="CP000854">
    <property type="protein sequence ID" value="ACC39489.1"/>
    <property type="molecule type" value="Genomic_DNA"/>
</dbReference>
<dbReference type="RefSeq" id="WP_012392938.1">
    <property type="nucleotide sequence ID" value="NC_010612.1"/>
</dbReference>
<dbReference type="SMR" id="B2HSN1"/>
<dbReference type="STRING" id="216594.MMAR_1031"/>
<dbReference type="GeneID" id="34339342"/>
<dbReference type="KEGG" id="mmi:MMAR_1031"/>
<dbReference type="eggNOG" id="COG0087">
    <property type="taxonomic scope" value="Bacteria"/>
</dbReference>
<dbReference type="HOGENOM" id="CLU_044142_4_1_11"/>
<dbReference type="OrthoDB" id="9806135at2"/>
<dbReference type="Proteomes" id="UP000001190">
    <property type="component" value="Chromosome"/>
</dbReference>
<dbReference type="GO" id="GO:0022625">
    <property type="term" value="C:cytosolic large ribosomal subunit"/>
    <property type="evidence" value="ECO:0007669"/>
    <property type="project" value="TreeGrafter"/>
</dbReference>
<dbReference type="GO" id="GO:0019843">
    <property type="term" value="F:rRNA binding"/>
    <property type="evidence" value="ECO:0007669"/>
    <property type="project" value="UniProtKB-UniRule"/>
</dbReference>
<dbReference type="GO" id="GO:0003735">
    <property type="term" value="F:structural constituent of ribosome"/>
    <property type="evidence" value="ECO:0007669"/>
    <property type="project" value="InterPro"/>
</dbReference>
<dbReference type="GO" id="GO:0006412">
    <property type="term" value="P:translation"/>
    <property type="evidence" value="ECO:0007669"/>
    <property type="project" value="UniProtKB-UniRule"/>
</dbReference>
<dbReference type="FunFam" id="2.40.30.10:FF:000004">
    <property type="entry name" value="50S ribosomal protein L3"/>
    <property type="match status" value="1"/>
</dbReference>
<dbReference type="FunFam" id="3.30.160.810:FF:000001">
    <property type="entry name" value="50S ribosomal protein L3"/>
    <property type="match status" value="1"/>
</dbReference>
<dbReference type="Gene3D" id="3.30.160.810">
    <property type="match status" value="1"/>
</dbReference>
<dbReference type="Gene3D" id="2.40.30.10">
    <property type="entry name" value="Translation factors"/>
    <property type="match status" value="1"/>
</dbReference>
<dbReference type="HAMAP" id="MF_01325_B">
    <property type="entry name" value="Ribosomal_uL3_B"/>
    <property type="match status" value="1"/>
</dbReference>
<dbReference type="InterPro" id="IPR000597">
    <property type="entry name" value="Ribosomal_uL3"/>
</dbReference>
<dbReference type="InterPro" id="IPR019927">
    <property type="entry name" value="Ribosomal_uL3_bac/org-type"/>
</dbReference>
<dbReference type="InterPro" id="IPR019926">
    <property type="entry name" value="Ribosomal_uL3_CS"/>
</dbReference>
<dbReference type="InterPro" id="IPR009000">
    <property type="entry name" value="Transl_B-barrel_sf"/>
</dbReference>
<dbReference type="NCBIfam" id="TIGR03625">
    <property type="entry name" value="L3_bact"/>
    <property type="match status" value="1"/>
</dbReference>
<dbReference type="PANTHER" id="PTHR11229">
    <property type="entry name" value="50S RIBOSOMAL PROTEIN L3"/>
    <property type="match status" value="1"/>
</dbReference>
<dbReference type="PANTHER" id="PTHR11229:SF16">
    <property type="entry name" value="LARGE RIBOSOMAL SUBUNIT PROTEIN UL3C"/>
    <property type="match status" value="1"/>
</dbReference>
<dbReference type="Pfam" id="PF00297">
    <property type="entry name" value="Ribosomal_L3"/>
    <property type="match status" value="1"/>
</dbReference>
<dbReference type="SUPFAM" id="SSF50447">
    <property type="entry name" value="Translation proteins"/>
    <property type="match status" value="1"/>
</dbReference>
<dbReference type="PROSITE" id="PS00474">
    <property type="entry name" value="RIBOSOMAL_L3"/>
    <property type="match status" value="1"/>
</dbReference>
<gene>
    <name evidence="1" type="primary">rplC</name>
    <name type="ordered locus">MMAR_1031</name>
</gene>
<proteinExistence type="inferred from homology"/>
<comment type="function">
    <text evidence="1">One of the primary rRNA binding proteins, it binds directly near the 3'-end of the 23S rRNA, where it nucleates assembly of the 50S subunit.</text>
</comment>
<comment type="subunit">
    <text evidence="1">Part of the 50S ribosomal subunit. Forms a cluster with proteins L14 and L19.</text>
</comment>
<comment type="similarity">
    <text evidence="1">Belongs to the universal ribosomal protein uL3 family.</text>
</comment>